<gene>
    <name type="primary">U47</name>
    <name type="synonym">KA8L</name>
</gene>
<protein>
    <recommendedName>
        <fullName>130 kDa Glycoprotein O</fullName>
        <shortName>gO-130K</shortName>
    </recommendedName>
    <alternativeName>
        <fullName>Glycoprotein U47</fullName>
    </alternativeName>
    <component>
        <recommendedName>
            <fullName>80 kDa Glycoprotein O</fullName>
            <shortName>gO-80K</shortName>
        </recommendedName>
    </component>
</protein>
<accession>P52549</accession>
<evidence type="ECO:0000250" key="1">
    <source>
        <dbReference type="UniProtKB" id="P30005"/>
    </source>
</evidence>
<evidence type="ECO:0000255" key="2"/>
<evidence type="ECO:0000256" key="3">
    <source>
        <dbReference type="SAM" id="MobiDB-lite"/>
    </source>
</evidence>
<evidence type="ECO:0000269" key="4">
    <source>
    </source>
</evidence>
<evidence type="ECO:0000305" key="5"/>
<sequence>MLHISRLGLFLALFAIVMHSVNLIKYTSDPLEAFKTVNRHNWSDEQREHFYDLRNLYTTFCQRNLSLDCFTQILTNVFSWNIRDLQCKSAVNLSPLQNLPRAETKIVLSSTAANKSIVASSFSLFYLLFATLSTYTADPPCVELLPFKILGTQLFDIKLTDESLQMAISKFSNSNLTRSLTPFTPEIFFNYTSFVYFLLYNTTSCIRSNDQYFEHSPKPINVTTSFGRAIVNFHSILTTTPSSTPSSTSASITSPHIPSTNTPTPEPSPVTKNFTELQTDTIKVTPNTPTITAQTTESIKKVVKRSDFPRPMYTPTDIPTLTIRRNATIKTEQNTENPTENPKSPPKPTNFENTTIRIPETFESTTVATNTTQKLESTTFATTIGIEEISDNIYSSPKNSIYLKSKSQQSTTKFTDTEHTTPILKFTTWQDAARTYMSHNTEVQNMTENFIKISLGETMGITPKEPTNPTQLLNVKNQTEYANETHSTEVQTVKTFKEDRFQRTTLKSSSEPPTVQTLSVTPKKKLPSNVTAKTEVQVTNNALPSSNSSHSITKVTEEPKQNRMSASTHGEINHTEIPRMTPILNAHTWEKSTTPQWPFTAETSLTTSSKSAILTWSNLLTTPKEPLTNTSLRSTNHITTQLTTSNRTQSAKLTKAHVSSQTTNIYPQTITERSTDVKKKSSTESREANKTLPGNDYRVTDKNSHNHPDNLTTKAYSTQNATHYTYNERHDLNNTDST</sequence>
<name>GO_HHV6Z</name>
<comment type="subunit">
    <molecule>80 kDa Glycoprotein O</molecule>
    <text evidence="4">Part of a gH-gL-gO complex.</text>
</comment>
<comment type="subcellular location">
    <molecule>80 kDa Glycoprotein O</molecule>
    <subcellularLocation>
        <location evidence="4">Virion</location>
    </subcellularLocation>
    <subcellularLocation>
        <location evidence="1">Host cell membrane</location>
    </subcellularLocation>
</comment>
<comment type="PTM">
    <text evidence="1">120 kDa Glycoprotein O: A shorter mature protein, gO-80K, is produced probably by proteolytic cleavage.</text>
</comment>
<comment type="PTM">
    <text evidence="4">120 kDa Glycoprotein O: Modified with high mannose-oligosaccharides.</text>
</comment>
<comment type="PTM">
    <molecule>80 kDa Glycoprotein O</molecule>
    <text evidence="4">N-glycosylated with complex glycans.</text>
</comment>
<comment type="similarity">
    <text evidence="5">Belongs to the herpesviridae U47 family.</text>
</comment>
<feature type="signal peptide" evidence="2">
    <location>
        <begin position="1"/>
        <end position="23"/>
    </location>
</feature>
<feature type="chain" id="PRO_0000038317" description="130 kDa Glycoprotein O">
    <location>
        <begin position="24"/>
        <end position="738"/>
    </location>
</feature>
<feature type="chain" id="PRO_0000445359" description="80 kDa Glycoprotein O">
    <location>
        <begin position="24"/>
        <end status="unknown"/>
    </location>
</feature>
<feature type="region of interest" description="Disordered" evidence="3">
    <location>
        <begin position="240"/>
        <end position="272"/>
    </location>
</feature>
<feature type="region of interest" description="Disordered" evidence="3">
    <location>
        <begin position="330"/>
        <end position="351"/>
    </location>
</feature>
<feature type="region of interest" description="Disordered" evidence="3">
    <location>
        <begin position="541"/>
        <end position="568"/>
    </location>
</feature>
<feature type="region of interest" description="Disordered" evidence="3">
    <location>
        <begin position="667"/>
        <end position="712"/>
    </location>
</feature>
<feature type="compositionally biased region" description="Low complexity" evidence="3">
    <location>
        <begin position="240"/>
        <end position="263"/>
    </location>
</feature>
<feature type="compositionally biased region" description="Polar residues" evidence="3">
    <location>
        <begin position="330"/>
        <end position="342"/>
    </location>
</feature>
<feature type="compositionally biased region" description="Polar residues" evidence="3">
    <location>
        <begin position="541"/>
        <end position="554"/>
    </location>
</feature>
<feature type="compositionally biased region" description="Basic and acidic residues" evidence="3">
    <location>
        <begin position="673"/>
        <end position="689"/>
    </location>
</feature>
<feature type="compositionally biased region" description="Basic and acidic residues" evidence="3">
    <location>
        <begin position="698"/>
        <end position="708"/>
    </location>
</feature>
<feature type="glycosylation site" description="N-linked (GlcNAc...) asparagine; by host" evidence="2">
    <location>
        <position position="41"/>
    </location>
</feature>
<feature type="glycosylation site" description="N-linked (GlcNAc...) asparagine; by host" evidence="2">
    <location>
        <position position="64"/>
    </location>
</feature>
<feature type="glycosylation site" description="N-linked (GlcNAc...) asparagine; by host" evidence="2">
    <location>
        <position position="114"/>
    </location>
</feature>
<feature type="glycosylation site" description="N-linked (GlcNAc...) asparagine; by host" evidence="2">
    <location>
        <position position="175"/>
    </location>
</feature>
<feature type="glycosylation site" description="N-linked (GlcNAc...) asparagine; by host" evidence="2">
    <location>
        <position position="190"/>
    </location>
</feature>
<feature type="glycosylation site" description="N-linked (GlcNAc...) asparagine; by host" evidence="2">
    <location>
        <position position="201"/>
    </location>
</feature>
<feature type="glycosylation site" description="N-linked (GlcNAc...) asparagine; by host" evidence="2">
    <location>
        <position position="221"/>
    </location>
</feature>
<feature type="glycosylation site" description="N-linked (GlcNAc...) asparagine; by host" evidence="2">
    <location>
        <position position="273"/>
    </location>
</feature>
<feature type="glycosylation site" description="N-linked (GlcNAc...) asparagine; by host" evidence="2">
    <location>
        <position position="326"/>
    </location>
</feature>
<feature type="glycosylation site" description="N-linked (GlcNAc...) asparagine; by host" evidence="2">
    <location>
        <position position="353"/>
    </location>
</feature>
<feature type="glycosylation site" description="N-linked (GlcNAc...) asparagine; by host" evidence="2">
    <location>
        <position position="370"/>
    </location>
</feature>
<feature type="glycosylation site" description="N-linked (GlcNAc...) asparagine; by host" evidence="2">
    <location>
        <position position="445"/>
    </location>
</feature>
<feature type="glycosylation site" description="N-linked (GlcNAc...) asparagine; by host" evidence="2">
    <location>
        <position position="477"/>
    </location>
</feature>
<feature type="glycosylation site" description="N-linked (GlcNAc...) asparagine; by host" evidence="2">
    <location>
        <position position="483"/>
    </location>
</feature>
<feature type="glycosylation site" description="N-linked (GlcNAc...) asparagine; by host" evidence="2">
    <location>
        <position position="529"/>
    </location>
</feature>
<feature type="glycosylation site" description="N-linked (GlcNAc...) asparagine; by host" evidence="2">
    <location>
        <position position="547"/>
    </location>
</feature>
<feature type="glycosylation site" description="N-linked (GlcNAc...) asparagine; by host" evidence="2">
    <location>
        <position position="573"/>
    </location>
</feature>
<feature type="glycosylation site" description="N-linked (GlcNAc...) asparagine; by host" evidence="2">
    <location>
        <position position="629"/>
    </location>
</feature>
<feature type="glycosylation site" description="N-linked (GlcNAc...) asparagine; by host" evidence="2">
    <location>
        <position position="646"/>
    </location>
</feature>
<feature type="glycosylation site" description="N-linked (GlcNAc...) asparagine; by host" evidence="2">
    <location>
        <position position="689"/>
    </location>
</feature>
<feature type="glycosylation site" description="N-linked (GlcNAc...) asparagine; by host" evidence="2">
    <location>
        <position position="710"/>
    </location>
</feature>
<feature type="glycosylation site" description="N-linked (GlcNAc...) asparagine; by host" evidence="2">
    <location>
        <position position="720"/>
    </location>
</feature>
<feature type="glycosylation site" description="N-linked (GlcNAc...) asparagine; by host" evidence="2">
    <location>
        <position position="733"/>
    </location>
</feature>
<reference key="1">
    <citation type="journal article" date="1995" name="J. Virol.">
        <title>Intragenomic linear amplification of human herpesvirus 6B oriLyt suggests acquisition of oriLyt by transposition.</title>
        <authorList>
            <person name="Stamey F.R."/>
            <person name="Dominguez G."/>
            <person name="Black J.B."/>
            <person name="Dambaugh T.R."/>
            <person name="Pellett P.E."/>
        </authorList>
    </citation>
    <scope>NUCLEOTIDE SEQUENCE [GENOMIC DNA]</scope>
</reference>
<reference key="2">
    <citation type="journal article" date="1999" name="J. Virol.">
        <title>Human herpesvirus 6B genome sequence: coding content and comparison with human herpesvirus 6A.</title>
        <authorList>
            <person name="Dominguez G."/>
            <person name="Dambaugh T.R."/>
            <person name="Stamey F.R."/>
            <person name="Dewhurst S."/>
            <person name="Inoue N."/>
            <person name="Pellett P.E."/>
        </authorList>
    </citation>
    <scope>NUCLEOTIDE SEQUENCE [LARGE SCALE GENOMIC DNA]</scope>
</reference>
<reference key="3">
    <citation type="journal article" date="2004" name="J. Virol.">
        <title>Discovery of a second form of tripartite complex containing gH-gL of human herpesvirus 6 and observations on CD46.</title>
        <authorList>
            <person name="Mori Y."/>
            <person name="Akkapaiboon P."/>
            <person name="Yonemoto S."/>
            <person name="Koike M."/>
            <person name="Takemoto M."/>
            <person name="Sadaoka T."/>
            <person name="Sasamoto Y."/>
            <person name="Konishi S."/>
            <person name="Uchiyama Y."/>
            <person name="Yamanishi K."/>
        </authorList>
    </citation>
    <scope>IDENTIFICATION IN COMPLEX WITH GLYCOPROTEIN L AND GLYCOPROTEIN H (80 KDA GLYCOPROTEIN O)</scope>
    <scope>SUBCELLULAR LOCATION (80 KDA GLYCOPROTEIN O)</scope>
    <scope>GLYCOSYLATION (80 KDA GLYCOPROTEIN O)</scope>
    <scope>GLYCOSYLATION (120 KDA GLYCOPROTEIN O)</scope>
    <source>
        <strain>HST</strain>
    </source>
</reference>
<organism>
    <name type="scientific">Human herpesvirus 6B (strain Z29)</name>
    <name type="common">HHV-6 variant B</name>
    <name type="synonym">Human B lymphotropic virus</name>
    <dbReference type="NCBI Taxonomy" id="36351"/>
    <lineage>
        <taxon>Viruses</taxon>
        <taxon>Duplodnaviria</taxon>
        <taxon>Heunggongvirae</taxon>
        <taxon>Peploviricota</taxon>
        <taxon>Herviviricetes</taxon>
        <taxon>Herpesvirales</taxon>
        <taxon>Orthoherpesviridae</taxon>
        <taxon>Betaherpesvirinae</taxon>
        <taxon>Roseolovirus</taxon>
        <taxon>Roseolovirus humanbeta6b</taxon>
        <taxon>Human herpesvirus 6B</taxon>
    </lineage>
</organism>
<dbReference type="EMBL" id="AF157706">
    <property type="protein sequence ID" value="AAB06345.1"/>
    <property type="molecule type" value="Genomic_DNA"/>
</dbReference>
<dbReference type="PIR" id="T44194">
    <property type="entry name" value="T44194"/>
</dbReference>
<dbReference type="RefSeq" id="NP_050228.1">
    <property type="nucleotide sequence ID" value="NC_000898.1"/>
</dbReference>
<dbReference type="GlyCosmos" id="P52549">
    <property type="glycosylation" value="23 sites, No reported glycans"/>
</dbReference>
<dbReference type="DNASU" id="1497049"/>
<dbReference type="GeneID" id="1497049"/>
<dbReference type="KEGG" id="vg:1497049"/>
<dbReference type="Proteomes" id="UP000006930">
    <property type="component" value="Segment"/>
</dbReference>
<dbReference type="GO" id="GO:0020002">
    <property type="term" value="C:host cell plasma membrane"/>
    <property type="evidence" value="ECO:0007669"/>
    <property type="project" value="UniProtKB-SubCell"/>
</dbReference>
<dbReference type="GO" id="GO:0016020">
    <property type="term" value="C:membrane"/>
    <property type="evidence" value="ECO:0007669"/>
    <property type="project" value="UniProtKB-KW"/>
</dbReference>
<dbReference type="GO" id="GO:0044423">
    <property type="term" value="C:virion component"/>
    <property type="evidence" value="ECO:0007669"/>
    <property type="project" value="UniProtKB-KW"/>
</dbReference>
<dbReference type="InterPro" id="IPR008645">
    <property type="entry name" value="Roseolovirus_U47"/>
</dbReference>
<dbReference type="Pfam" id="PF05467">
    <property type="entry name" value="Herpes_U47"/>
    <property type="match status" value="1"/>
</dbReference>
<proteinExistence type="evidence at protein level"/>
<organismHost>
    <name type="scientific">Homo sapiens</name>
    <name type="common">Human</name>
    <dbReference type="NCBI Taxonomy" id="9606"/>
</organismHost>
<keyword id="KW-0325">Glycoprotein</keyword>
<keyword id="KW-1032">Host cell membrane</keyword>
<keyword id="KW-1043">Host membrane</keyword>
<keyword id="KW-0472">Membrane</keyword>
<keyword id="KW-1185">Reference proteome</keyword>
<keyword id="KW-0732">Signal</keyword>
<keyword id="KW-0946">Virion</keyword>